<organism>
    <name type="scientific">Listeria monocytogenes serotype 4b (strain F2365)</name>
    <dbReference type="NCBI Taxonomy" id="265669"/>
    <lineage>
        <taxon>Bacteria</taxon>
        <taxon>Bacillati</taxon>
        <taxon>Bacillota</taxon>
        <taxon>Bacilli</taxon>
        <taxon>Bacillales</taxon>
        <taxon>Listeriaceae</taxon>
        <taxon>Listeria</taxon>
    </lineage>
</organism>
<feature type="chain" id="PRO_0000190344" description="Recombination protein RecR">
    <location>
        <begin position="1"/>
        <end position="198"/>
    </location>
</feature>
<feature type="domain" description="Toprim" evidence="1">
    <location>
        <begin position="80"/>
        <end position="175"/>
    </location>
</feature>
<feature type="zinc finger region" description="C4-type" evidence="1">
    <location>
        <begin position="57"/>
        <end position="72"/>
    </location>
</feature>
<gene>
    <name evidence="1" type="primary">recR</name>
    <name type="ordered locus">LMOf2365_2682</name>
</gene>
<comment type="function">
    <text evidence="1">May play a role in DNA repair. It seems to be involved in an RecBC-independent recombinational process of DNA repair. It may act with RecF and RecO.</text>
</comment>
<comment type="similarity">
    <text evidence="1">Belongs to the RecR family.</text>
</comment>
<keyword id="KW-0227">DNA damage</keyword>
<keyword id="KW-0233">DNA recombination</keyword>
<keyword id="KW-0234">DNA repair</keyword>
<keyword id="KW-0479">Metal-binding</keyword>
<keyword id="KW-0862">Zinc</keyword>
<keyword id="KW-0863">Zinc-finger</keyword>
<accession>Q71W69</accession>
<dbReference type="EMBL" id="AE017262">
    <property type="protein sequence ID" value="AAT05447.1"/>
    <property type="molecule type" value="Genomic_DNA"/>
</dbReference>
<dbReference type="RefSeq" id="WP_003722062.1">
    <property type="nucleotide sequence ID" value="NC_002973.6"/>
</dbReference>
<dbReference type="SMR" id="Q71W69"/>
<dbReference type="GeneID" id="93240591"/>
<dbReference type="KEGG" id="lmf:LMOf2365_2682"/>
<dbReference type="HOGENOM" id="CLU_060739_1_0_9"/>
<dbReference type="GO" id="GO:0003677">
    <property type="term" value="F:DNA binding"/>
    <property type="evidence" value="ECO:0007669"/>
    <property type="project" value="UniProtKB-UniRule"/>
</dbReference>
<dbReference type="GO" id="GO:0008270">
    <property type="term" value="F:zinc ion binding"/>
    <property type="evidence" value="ECO:0007669"/>
    <property type="project" value="UniProtKB-KW"/>
</dbReference>
<dbReference type="GO" id="GO:0006310">
    <property type="term" value="P:DNA recombination"/>
    <property type="evidence" value="ECO:0007669"/>
    <property type="project" value="UniProtKB-UniRule"/>
</dbReference>
<dbReference type="GO" id="GO:0006281">
    <property type="term" value="P:DNA repair"/>
    <property type="evidence" value="ECO:0007669"/>
    <property type="project" value="UniProtKB-UniRule"/>
</dbReference>
<dbReference type="CDD" id="cd01025">
    <property type="entry name" value="TOPRIM_recR"/>
    <property type="match status" value="1"/>
</dbReference>
<dbReference type="Gene3D" id="3.30.60.80">
    <property type="match status" value="1"/>
</dbReference>
<dbReference type="Gene3D" id="3.40.1360.10">
    <property type="match status" value="1"/>
</dbReference>
<dbReference type="Gene3D" id="6.10.250.240">
    <property type="match status" value="1"/>
</dbReference>
<dbReference type="Gene3D" id="1.10.8.420">
    <property type="entry name" value="RecR Domain 1"/>
    <property type="match status" value="1"/>
</dbReference>
<dbReference type="HAMAP" id="MF_00017">
    <property type="entry name" value="RecR"/>
    <property type="match status" value="1"/>
</dbReference>
<dbReference type="InterPro" id="IPR000093">
    <property type="entry name" value="DNA_Rcmb_RecR"/>
</dbReference>
<dbReference type="InterPro" id="IPR023627">
    <property type="entry name" value="Rcmb_RecR"/>
</dbReference>
<dbReference type="InterPro" id="IPR015967">
    <property type="entry name" value="Rcmb_RecR_Znf"/>
</dbReference>
<dbReference type="InterPro" id="IPR006171">
    <property type="entry name" value="TOPRIM_dom"/>
</dbReference>
<dbReference type="InterPro" id="IPR034137">
    <property type="entry name" value="TOPRIM_RecR"/>
</dbReference>
<dbReference type="NCBIfam" id="TIGR00615">
    <property type="entry name" value="recR"/>
    <property type="match status" value="1"/>
</dbReference>
<dbReference type="PANTHER" id="PTHR30446">
    <property type="entry name" value="RECOMBINATION PROTEIN RECR"/>
    <property type="match status" value="1"/>
</dbReference>
<dbReference type="PANTHER" id="PTHR30446:SF0">
    <property type="entry name" value="RECOMBINATION PROTEIN RECR"/>
    <property type="match status" value="1"/>
</dbReference>
<dbReference type="Pfam" id="PF21175">
    <property type="entry name" value="RecR_C"/>
    <property type="match status" value="1"/>
</dbReference>
<dbReference type="Pfam" id="PF21176">
    <property type="entry name" value="RecR_HhH"/>
    <property type="match status" value="1"/>
</dbReference>
<dbReference type="Pfam" id="PF02132">
    <property type="entry name" value="RecR_ZnF"/>
    <property type="match status" value="1"/>
</dbReference>
<dbReference type="Pfam" id="PF13662">
    <property type="entry name" value="Toprim_4"/>
    <property type="match status" value="1"/>
</dbReference>
<dbReference type="SMART" id="SM00493">
    <property type="entry name" value="TOPRIM"/>
    <property type="match status" value="1"/>
</dbReference>
<dbReference type="SUPFAM" id="SSF111304">
    <property type="entry name" value="Recombination protein RecR"/>
    <property type="match status" value="1"/>
</dbReference>
<dbReference type="PROSITE" id="PS01300">
    <property type="entry name" value="RECR"/>
    <property type="match status" value="1"/>
</dbReference>
<dbReference type="PROSITE" id="PS50880">
    <property type="entry name" value="TOPRIM"/>
    <property type="match status" value="1"/>
</dbReference>
<evidence type="ECO:0000255" key="1">
    <source>
        <dbReference type="HAMAP-Rule" id="MF_00017"/>
    </source>
</evidence>
<sequence length="198" mass="21934">MHYPEPITKLIDSFMKLPGIGPKSAARLAFYVLDMKEDDVLDFAKALVDAKRNLSFCSVCGHITDKDPCYICADTSRDRSVICVVQESKDVIAMEKMRDFHGLYHVLHGTISPMDGIGPEDINIPDLLKRLQDDTIEEVILATNPNVEGEATAMYISRLLKPSGIKVTRIAHGLPVGGDLEYADEVTLSKAMEGRREV</sequence>
<reference key="1">
    <citation type="journal article" date="2004" name="Nucleic Acids Res.">
        <title>Whole genome comparisons of serotype 4b and 1/2a strains of the food-borne pathogen Listeria monocytogenes reveal new insights into the core genome components of this species.</title>
        <authorList>
            <person name="Nelson K.E."/>
            <person name="Fouts D.E."/>
            <person name="Mongodin E.F."/>
            <person name="Ravel J."/>
            <person name="DeBoy R.T."/>
            <person name="Kolonay J.F."/>
            <person name="Rasko D.A."/>
            <person name="Angiuoli S.V."/>
            <person name="Gill S.R."/>
            <person name="Paulsen I.T."/>
            <person name="Peterson J.D."/>
            <person name="White O."/>
            <person name="Nelson W.C."/>
            <person name="Nierman W.C."/>
            <person name="Beanan M.J."/>
            <person name="Brinkac L.M."/>
            <person name="Daugherty S.C."/>
            <person name="Dodson R.J."/>
            <person name="Durkin A.S."/>
            <person name="Madupu R."/>
            <person name="Haft D.H."/>
            <person name="Selengut J."/>
            <person name="Van Aken S.E."/>
            <person name="Khouri H.M."/>
            <person name="Fedorova N."/>
            <person name="Forberger H.A."/>
            <person name="Tran B."/>
            <person name="Kathariou S."/>
            <person name="Wonderling L.D."/>
            <person name="Uhlich G.A."/>
            <person name="Bayles D.O."/>
            <person name="Luchansky J.B."/>
            <person name="Fraser C.M."/>
        </authorList>
    </citation>
    <scope>NUCLEOTIDE SEQUENCE [LARGE SCALE GENOMIC DNA]</scope>
    <source>
        <strain>F2365</strain>
    </source>
</reference>
<protein>
    <recommendedName>
        <fullName evidence="1">Recombination protein RecR</fullName>
    </recommendedName>
</protein>
<proteinExistence type="inferred from homology"/>
<name>RECR_LISMF</name>